<accession>Q2KIP2</accession>
<protein>
    <recommendedName>
        <fullName>Serine/threonine-protein kinase haspin</fullName>
        <ecNumber>2.7.11.1</ecNumber>
    </recommendedName>
    <alternativeName>
        <fullName>Germ cell-specific gene 2 protein</fullName>
    </alternativeName>
</protein>
<proteinExistence type="evidence at transcript level"/>
<keyword id="KW-0067">ATP-binding</keyword>
<keyword id="KW-0131">Cell cycle</keyword>
<keyword id="KW-0156">Chromatin regulator</keyword>
<keyword id="KW-0158">Chromosome</keyword>
<keyword id="KW-0963">Cytoplasm</keyword>
<keyword id="KW-0206">Cytoskeleton</keyword>
<keyword id="KW-0418">Kinase</keyword>
<keyword id="KW-0460">Magnesium</keyword>
<keyword id="KW-0547">Nucleotide-binding</keyword>
<keyword id="KW-0539">Nucleus</keyword>
<keyword id="KW-0597">Phosphoprotein</keyword>
<keyword id="KW-1185">Reference proteome</keyword>
<keyword id="KW-0723">Serine/threonine-protein kinase</keyword>
<keyword id="KW-0808">Transferase</keyword>
<sequence>MAASLPLPASGLFRTYGAAGGGRPRRRQGLAAVQWFPPQDRKRFFSSSSSDTSSGGPSQSVVSDDPDDPDFPGSPVGQRRRRAGARLAKGRPSQIATPRRLRLRSRCPQKCSTPCGALEPPSFPNGNPGSLSPDLRVCGQPRDGGELGTSASLFSSLASPGPGFPAPEDSICTDPSTFLDAASEAPSNFHLPEASLDQAPLPCSQDAATGGGRFTRLAHQAQASLRSALFSFLDPGNPEDSELGTDGKNLQEFCHDRELVGRRLESPGLSGRGKKRTTDQDSCREIESQESVQIEYEEARGCKGGIASGKSNGPERTRLSRKRKHQGTAETSLLHHCQVTKGQKMEDGSCVTQDLTRLQNACSWTKTRASFSFHKKKIVTAVSEVCSCDTLAGSLSESLMSEYSHHPVQNRTSCALSPWHSSSMYLLTPLKTQQVTDKRTSDAEKLYGECNQVGPIPFSDYLSEEKLECCEKIGEGVFGEVFQTVTNHTPVALKIIAIEGQNLVNGAHQKTFEEILPEIIISKELSLLSDEACNRTEGFIGLNSVHCVQGSYPPLLLQAWDHYHSTKGSANDRPDFFREDQLFIVLEFEFGGIDLEQMRKKLSSIATAKSILHQITASLAVAEASLHFEHRDLHWGNVLLKKTSLKELHYTLNGKKSSIPTRGLQVNIIDYTLSRLERDGIVVFCDISRDEDLFMGQGDYQFEIYRLMRKENNNCWGEYHPYNNVLWLHYLTDKILNQMTFKSKHNTPALKRMKKQIQHFYQTMLNFSSATDLLCQHSLFK</sequence>
<organism>
    <name type="scientific">Bos taurus</name>
    <name type="common">Bovine</name>
    <dbReference type="NCBI Taxonomy" id="9913"/>
    <lineage>
        <taxon>Eukaryota</taxon>
        <taxon>Metazoa</taxon>
        <taxon>Chordata</taxon>
        <taxon>Craniata</taxon>
        <taxon>Vertebrata</taxon>
        <taxon>Euteleostomi</taxon>
        <taxon>Mammalia</taxon>
        <taxon>Eutheria</taxon>
        <taxon>Laurasiatheria</taxon>
        <taxon>Artiodactyla</taxon>
        <taxon>Ruminantia</taxon>
        <taxon>Pecora</taxon>
        <taxon>Bovidae</taxon>
        <taxon>Bovinae</taxon>
        <taxon>Bos</taxon>
    </lineage>
</organism>
<feature type="chain" id="PRO_0000413975" description="Serine/threonine-protein kinase haspin">
    <location>
        <begin position="1"/>
        <end position="781"/>
    </location>
</feature>
<feature type="domain" description="Protein kinase" evidence="2">
    <location>
        <begin position="467"/>
        <end position="781"/>
    </location>
</feature>
<feature type="region of interest" description="Disordered" evidence="3">
    <location>
        <begin position="1"/>
        <end position="102"/>
    </location>
</feature>
<feature type="region of interest" description="Disordered" evidence="3">
    <location>
        <begin position="261"/>
        <end position="290"/>
    </location>
</feature>
<feature type="region of interest" description="Disordered" evidence="3">
    <location>
        <begin position="303"/>
        <end position="330"/>
    </location>
</feature>
<feature type="compositionally biased region" description="Low complexity" evidence="3">
    <location>
        <begin position="46"/>
        <end position="63"/>
    </location>
</feature>
<feature type="compositionally biased region" description="Basic and acidic residues" evidence="3">
    <location>
        <begin position="276"/>
        <end position="287"/>
    </location>
</feature>
<feature type="active site" description="Proton acceptor" evidence="2">
    <location>
        <position position="632"/>
    </location>
</feature>
<feature type="binding site" evidence="2">
    <location>
        <begin position="473"/>
        <end position="481"/>
    </location>
    <ligand>
        <name>ATP</name>
        <dbReference type="ChEBI" id="CHEBI:30616"/>
    </ligand>
</feature>
<feature type="binding site" evidence="2">
    <location>
        <position position="494"/>
    </location>
    <ligand>
        <name>ATP</name>
        <dbReference type="ChEBI" id="CHEBI:30616"/>
    </ligand>
</feature>
<feature type="binding site" evidence="2">
    <location>
        <begin position="589"/>
        <end position="594"/>
    </location>
    <ligand>
        <name>ATP</name>
        <dbReference type="ChEBI" id="CHEBI:30616"/>
    </ligand>
</feature>
<feature type="binding site" evidence="2">
    <location>
        <begin position="632"/>
        <end position="637"/>
    </location>
    <ligand>
        <name>ATP</name>
        <dbReference type="ChEBI" id="CHEBI:30616"/>
    </ligand>
</feature>
<feature type="binding site" evidence="2">
    <location>
        <begin position="670"/>
        <end position="672"/>
    </location>
    <ligand>
        <name>ATP</name>
        <dbReference type="ChEBI" id="CHEBI:30616"/>
    </ligand>
</feature>
<feature type="modified residue" description="Phosphoserine" evidence="1">
    <location>
        <position position="58"/>
    </location>
</feature>
<feature type="modified residue" description="Phosphoserine" evidence="1">
    <location>
        <position position="93"/>
    </location>
</feature>
<feature type="modified residue" description="Phosphoserine" evidence="1">
    <location>
        <position position="132"/>
    </location>
</feature>
<comment type="function">
    <text evidence="1">Serine/threonine-protein kinase that phosphorylates histone H3 at 'Thr-3' (H3T3ph) during mitosis. May act through H3T3ph to both position and modulate activation of AURKB and other components of the chromosomal passenger complex (CPC) at centromeres to ensure proper chromatid cohesion, metaphase alignment and normal progression through the cell cycle.</text>
</comment>
<comment type="catalytic activity">
    <reaction evidence="1">
        <text>L-seryl-[protein] + ATP = O-phospho-L-seryl-[protein] + ADP + H(+)</text>
        <dbReference type="Rhea" id="RHEA:17989"/>
        <dbReference type="Rhea" id="RHEA-COMP:9863"/>
        <dbReference type="Rhea" id="RHEA-COMP:11604"/>
        <dbReference type="ChEBI" id="CHEBI:15378"/>
        <dbReference type="ChEBI" id="CHEBI:29999"/>
        <dbReference type="ChEBI" id="CHEBI:30616"/>
        <dbReference type="ChEBI" id="CHEBI:83421"/>
        <dbReference type="ChEBI" id="CHEBI:456216"/>
        <dbReference type="EC" id="2.7.11.1"/>
    </reaction>
</comment>
<comment type="catalytic activity">
    <reaction evidence="1">
        <text>L-threonyl-[protein] + ATP = O-phospho-L-threonyl-[protein] + ADP + H(+)</text>
        <dbReference type="Rhea" id="RHEA:46608"/>
        <dbReference type="Rhea" id="RHEA-COMP:11060"/>
        <dbReference type="Rhea" id="RHEA-COMP:11605"/>
        <dbReference type="ChEBI" id="CHEBI:15378"/>
        <dbReference type="ChEBI" id="CHEBI:30013"/>
        <dbReference type="ChEBI" id="CHEBI:30616"/>
        <dbReference type="ChEBI" id="CHEBI:61977"/>
        <dbReference type="ChEBI" id="CHEBI:456216"/>
        <dbReference type="EC" id="2.7.11.1"/>
    </reaction>
</comment>
<comment type="cofactor">
    <cofactor evidence="1">
        <name>Mg(2+)</name>
        <dbReference type="ChEBI" id="CHEBI:18420"/>
    </cofactor>
</comment>
<comment type="activity regulation">
    <text evidence="1">Constitutive activity that does not require phosphorylation. Specifically inhibited by 3-(1H-indazol-5-yl)-N-propylimidazo[1,2-b]pyridazin-6-amine (CHR-6494).</text>
</comment>
<comment type="subcellular location">
    <subcellularLocation>
        <location evidence="1">Nucleus</location>
    </subcellularLocation>
    <subcellularLocation>
        <location evidence="1">Chromosome</location>
    </subcellularLocation>
    <subcellularLocation>
        <location evidence="1">Cytoplasm</location>
        <location evidence="1">Cytoskeleton</location>
        <location evidence="1">Spindle</location>
    </subcellularLocation>
    <text evidence="1">Nuclear during interphase and associates with the chromosomes and spindle apparatus during mitosis.</text>
</comment>
<comment type="PTM">
    <text evidence="1">Autophosphorylated on both serine and threonine residues (By similarity). Strongly phosphorylated during mitosis but this does not appear to significantly affect its intrinsic kinase activity. Phosphorylation by AURKB is required for full activity toward histone H3 at 'Ser-3' in mitosis (By similarity).</text>
</comment>
<comment type="similarity">
    <text evidence="2">Belongs to the protein kinase superfamily. Ser/Thr protein kinase family. Haspin subfamily.</text>
</comment>
<evidence type="ECO:0000250" key="1">
    <source>
        <dbReference type="UniProtKB" id="Q8TF76"/>
    </source>
</evidence>
<evidence type="ECO:0000255" key="2">
    <source>
        <dbReference type="PROSITE-ProRule" id="PRU00159"/>
    </source>
</evidence>
<evidence type="ECO:0000256" key="3">
    <source>
        <dbReference type="SAM" id="MobiDB-lite"/>
    </source>
</evidence>
<gene>
    <name type="primary">HASPIN</name>
    <name type="synonym">GSG2</name>
</gene>
<name>HASP_BOVIN</name>
<reference key="1">
    <citation type="submission" date="2006-01" db="EMBL/GenBank/DDBJ databases">
        <authorList>
            <consortium name="NIH - Mammalian Gene Collection (MGC) project"/>
        </authorList>
    </citation>
    <scope>NUCLEOTIDE SEQUENCE [LARGE SCALE MRNA]</scope>
    <source>
        <strain>Hereford</strain>
        <tissue>Testis</tissue>
    </source>
</reference>
<dbReference type="EC" id="2.7.11.1"/>
<dbReference type="EMBL" id="BC112565">
    <property type="protein sequence ID" value="AAI12566.1"/>
    <property type="molecule type" value="mRNA"/>
</dbReference>
<dbReference type="RefSeq" id="NP_001070012.1">
    <property type="nucleotide sequence ID" value="NM_001076544.2"/>
</dbReference>
<dbReference type="SMR" id="Q2KIP2"/>
<dbReference type="FunCoup" id="Q2KIP2">
    <property type="interactions" value="502"/>
</dbReference>
<dbReference type="STRING" id="9913.ENSBTAP00000043277"/>
<dbReference type="PaxDb" id="9913-ENSBTAP00000043277"/>
<dbReference type="GeneID" id="767819"/>
<dbReference type="KEGG" id="bta:767819"/>
<dbReference type="CTD" id="83903"/>
<dbReference type="eggNOG" id="KOG2464">
    <property type="taxonomic scope" value="Eukaryota"/>
</dbReference>
<dbReference type="InParanoid" id="Q2KIP2"/>
<dbReference type="OrthoDB" id="21018at2759"/>
<dbReference type="Proteomes" id="UP000009136">
    <property type="component" value="Unplaced"/>
</dbReference>
<dbReference type="GO" id="GO:0005813">
    <property type="term" value="C:centrosome"/>
    <property type="evidence" value="ECO:0000250"/>
    <property type="project" value="UniProtKB"/>
</dbReference>
<dbReference type="GO" id="GO:0005694">
    <property type="term" value="C:chromosome"/>
    <property type="evidence" value="ECO:0007669"/>
    <property type="project" value="UniProtKB-SubCell"/>
</dbReference>
<dbReference type="GO" id="GO:0005737">
    <property type="term" value="C:cytoplasm"/>
    <property type="evidence" value="ECO:0000318"/>
    <property type="project" value="GO_Central"/>
</dbReference>
<dbReference type="GO" id="GO:0005634">
    <property type="term" value="C:nucleus"/>
    <property type="evidence" value="ECO:0000250"/>
    <property type="project" value="UniProtKB"/>
</dbReference>
<dbReference type="GO" id="GO:0005819">
    <property type="term" value="C:spindle"/>
    <property type="evidence" value="ECO:0000250"/>
    <property type="project" value="UniProtKB"/>
</dbReference>
<dbReference type="GO" id="GO:0005524">
    <property type="term" value="F:ATP binding"/>
    <property type="evidence" value="ECO:0007669"/>
    <property type="project" value="UniProtKB-KW"/>
</dbReference>
<dbReference type="GO" id="GO:0072354">
    <property type="term" value="F:histone H3T3 kinase activity"/>
    <property type="evidence" value="ECO:0000250"/>
    <property type="project" value="UniProtKB"/>
</dbReference>
<dbReference type="GO" id="GO:0106310">
    <property type="term" value="F:protein serine kinase activity"/>
    <property type="evidence" value="ECO:0007669"/>
    <property type="project" value="RHEA"/>
</dbReference>
<dbReference type="GO" id="GO:0035556">
    <property type="term" value="P:intracellular signal transduction"/>
    <property type="evidence" value="ECO:0000318"/>
    <property type="project" value="GO_Central"/>
</dbReference>
<dbReference type="GO" id="GO:0000278">
    <property type="term" value="P:mitotic cell cycle"/>
    <property type="evidence" value="ECO:0000318"/>
    <property type="project" value="GO_Central"/>
</dbReference>
<dbReference type="GO" id="GO:0007064">
    <property type="term" value="P:mitotic sister chromatid cohesion"/>
    <property type="evidence" value="ECO:0000250"/>
    <property type="project" value="UniProtKB"/>
</dbReference>
<dbReference type="GO" id="GO:0007094">
    <property type="term" value="P:mitotic spindle assembly checkpoint signaling"/>
    <property type="evidence" value="ECO:0000250"/>
    <property type="project" value="UniProtKB"/>
</dbReference>
<dbReference type="GO" id="GO:0071459">
    <property type="term" value="P:protein localization to chromosome, centromeric region"/>
    <property type="evidence" value="ECO:0000250"/>
    <property type="project" value="UniProtKB"/>
</dbReference>
<dbReference type="FunFam" id="1.10.510.10:FF:000401">
    <property type="entry name" value="serine/threonine-protein kinase haspin"/>
    <property type="match status" value="1"/>
</dbReference>
<dbReference type="FunFam" id="3.30.200.20:FF:000409">
    <property type="entry name" value="serine/threonine-protein kinase haspin"/>
    <property type="match status" value="1"/>
</dbReference>
<dbReference type="Gene3D" id="3.30.200.20">
    <property type="entry name" value="Phosphorylase Kinase, domain 1"/>
    <property type="match status" value="1"/>
</dbReference>
<dbReference type="Gene3D" id="1.10.510.10">
    <property type="entry name" value="Transferase(Phosphotransferase) domain 1"/>
    <property type="match status" value="1"/>
</dbReference>
<dbReference type="InterPro" id="IPR024604">
    <property type="entry name" value="GSG2_C"/>
</dbReference>
<dbReference type="InterPro" id="IPR011009">
    <property type="entry name" value="Kinase-like_dom_sf"/>
</dbReference>
<dbReference type="InterPro" id="IPR000719">
    <property type="entry name" value="Prot_kinase_dom"/>
</dbReference>
<dbReference type="InterPro" id="IPR017441">
    <property type="entry name" value="Protein_kinase_ATP_BS"/>
</dbReference>
<dbReference type="PANTHER" id="PTHR24419">
    <property type="entry name" value="INTERLEUKIN-1 RECEPTOR-ASSOCIATED KINASE"/>
    <property type="match status" value="1"/>
</dbReference>
<dbReference type="PANTHER" id="PTHR24419:SF18">
    <property type="entry name" value="SERINE_THREONINE-PROTEIN KINASE HASPIN"/>
    <property type="match status" value="1"/>
</dbReference>
<dbReference type="Pfam" id="PF12330">
    <property type="entry name" value="Haspin_kinase"/>
    <property type="match status" value="1"/>
</dbReference>
<dbReference type="SMART" id="SM01331">
    <property type="entry name" value="DUF3635"/>
    <property type="match status" value="1"/>
</dbReference>
<dbReference type="SMART" id="SM00220">
    <property type="entry name" value="S_TKc"/>
    <property type="match status" value="1"/>
</dbReference>
<dbReference type="SUPFAM" id="SSF56112">
    <property type="entry name" value="Protein kinase-like (PK-like)"/>
    <property type="match status" value="1"/>
</dbReference>
<dbReference type="PROSITE" id="PS00107">
    <property type="entry name" value="PROTEIN_KINASE_ATP"/>
    <property type="match status" value="1"/>
</dbReference>
<dbReference type="PROSITE" id="PS50011">
    <property type="entry name" value="PROTEIN_KINASE_DOM"/>
    <property type="match status" value="1"/>
</dbReference>